<evidence type="ECO:0000255" key="1">
    <source>
        <dbReference type="HAMAP-Rule" id="MF_00303"/>
    </source>
</evidence>
<comment type="function">
    <text evidence="1">Involved in protein export. Acts as a chaperone by maintaining the newly synthesized protein in an open conformation. Functions as a peptidyl-prolyl cis-trans isomerase.</text>
</comment>
<comment type="catalytic activity">
    <reaction evidence="1">
        <text>[protein]-peptidylproline (omega=180) = [protein]-peptidylproline (omega=0)</text>
        <dbReference type="Rhea" id="RHEA:16237"/>
        <dbReference type="Rhea" id="RHEA-COMP:10747"/>
        <dbReference type="Rhea" id="RHEA-COMP:10748"/>
        <dbReference type="ChEBI" id="CHEBI:83833"/>
        <dbReference type="ChEBI" id="CHEBI:83834"/>
        <dbReference type="EC" id="5.2.1.8"/>
    </reaction>
</comment>
<comment type="subcellular location">
    <subcellularLocation>
        <location>Cytoplasm</location>
    </subcellularLocation>
    <text evidence="1">About half TF is bound to the ribosome near the polypeptide exit tunnel while the other half is free in the cytoplasm.</text>
</comment>
<comment type="domain">
    <text evidence="1">Consists of 3 domains; the N-terminus binds the ribosome, the middle domain has PPIase activity, while the C-terminus has intrinsic chaperone activity on its own.</text>
</comment>
<comment type="similarity">
    <text evidence="1">Belongs to the FKBP-type PPIase family. Tig subfamily.</text>
</comment>
<protein>
    <recommendedName>
        <fullName evidence="1">Trigger factor</fullName>
        <shortName evidence="1">TF</shortName>
        <ecNumber evidence="1">5.2.1.8</ecNumber>
    </recommendedName>
    <alternativeName>
        <fullName evidence="1">PPIase</fullName>
    </alternativeName>
</protein>
<name>TIG_LACDB</name>
<reference key="1">
    <citation type="journal article" date="2006" name="Proc. Natl. Acad. Sci. U.S.A.">
        <title>Comparative genomics of the lactic acid bacteria.</title>
        <authorList>
            <person name="Makarova K.S."/>
            <person name="Slesarev A."/>
            <person name="Wolf Y.I."/>
            <person name="Sorokin A."/>
            <person name="Mirkin B."/>
            <person name="Koonin E.V."/>
            <person name="Pavlov A."/>
            <person name="Pavlova N."/>
            <person name="Karamychev V."/>
            <person name="Polouchine N."/>
            <person name="Shakhova V."/>
            <person name="Grigoriev I."/>
            <person name="Lou Y."/>
            <person name="Rohksar D."/>
            <person name="Lucas S."/>
            <person name="Huang K."/>
            <person name="Goodstein D.M."/>
            <person name="Hawkins T."/>
            <person name="Plengvidhya V."/>
            <person name="Welker D."/>
            <person name="Hughes J."/>
            <person name="Goh Y."/>
            <person name="Benson A."/>
            <person name="Baldwin K."/>
            <person name="Lee J.-H."/>
            <person name="Diaz-Muniz I."/>
            <person name="Dosti B."/>
            <person name="Smeianov V."/>
            <person name="Wechter W."/>
            <person name="Barabote R."/>
            <person name="Lorca G."/>
            <person name="Altermann E."/>
            <person name="Barrangou R."/>
            <person name="Ganesan B."/>
            <person name="Xie Y."/>
            <person name="Rawsthorne H."/>
            <person name="Tamir D."/>
            <person name="Parker C."/>
            <person name="Breidt F."/>
            <person name="Broadbent J.R."/>
            <person name="Hutkins R."/>
            <person name="O'Sullivan D."/>
            <person name="Steele J."/>
            <person name="Unlu G."/>
            <person name="Saier M.H. Jr."/>
            <person name="Klaenhammer T."/>
            <person name="Richardson P."/>
            <person name="Kozyavkin S."/>
            <person name="Weimer B.C."/>
            <person name="Mills D.A."/>
        </authorList>
    </citation>
    <scope>NUCLEOTIDE SEQUENCE [LARGE SCALE GENOMIC DNA]</scope>
    <source>
        <strain>ATCC BAA-365 / Lb-18</strain>
    </source>
</reference>
<dbReference type="EC" id="5.2.1.8" evidence="1"/>
<dbReference type="EMBL" id="CP000412">
    <property type="protein sequence ID" value="ABJ58336.1"/>
    <property type="molecule type" value="Genomic_DNA"/>
</dbReference>
<dbReference type="RefSeq" id="WP_003619232.1">
    <property type="nucleotide sequence ID" value="NC_008529.1"/>
</dbReference>
<dbReference type="SMR" id="Q04B36"/>
<dbReference type="KEGG" id="lbu:LBUL_0710"/>
<dbReference type="PATRIC" id="fig|390333.7.peg.724"/>
<dbReference type="HOGENOM" id="CLU_033058_3_2_9"/>
<dbReference type="BioCyc" id="LDEL321956:LBUL_RS03395-MONOMER"/>
<dbReference type="GO" id="GO:0005737">
    <property type="term" value="C:cytoplasm"/>
    <property type="evidence" value="ECO:0007669"/>
    <property type="project" value="UniProtKB-SubCell"/>
</dbReference>
<dbReference type="GO" id="GO:0003755">
    <property type="term" value="F:peptidyl-prolyl cis-trans isomerase activity"/>
    <property type="evidence" value="ECO:0007669"/>
    <property type="project" value="UniProtKB-UniRule"/>
</dbReference>
<dbReference type="GO" id="GO:0044183">
    <property type="term" value="F:protein folding chaperone"/>
    <property type="evidence" value="ECO:0007669"/>
    <property type="project" value="TreeGrafter"/>
</dbReference>
<dbReference type="GO" id="GO:0043022">
    <property type="term" value="F:ribosome binding"/>
    <property type="evidence" value="ECO:0007669"/>
    <property type="project" value="TreeGrafter"/>
</dbReference>
<dbReference type="GO" id="GO:0051083">
    <property type="term" value="P:'de novo' cotranslational protein folding"/>
    <property type="evidence" value="ECO:0007669"/>
    <property type="project" value="TreeGrafter"/>
</dbReference>
<dbReference type="GO" id="GO:0051301">
    <property type="term" value="P:cell division"/>
    <property type="evidence" value="ECO:0007669"/>
    <property type="project" value="UniProtKB-KW"/>
</dbReference>
<dbReference type="GO" id="GO:0061077">
    <property type="term" value="P:chaperone-mediated protein folding"/>
    <property type="evidence" value="ECO:0007669"/>
    <property type="project" value="TreeGrafter"/>
</dbReference>
<dbReference type="GO" id="GO:0015031">
    <property type="term" value="P:protein transport"/>
    <property type="evidence" value="ECO:0007669"/>
    <property type="project" value="UniProtKB-UniRule"/>
</dbReference>
<dbReference type="GO" id="GO:0043335">
    <property type="term" value="P:protein unfolding"/>
    <property type="evidence" value="ECO:0007669"/>
    <property type="project" value="TreeGrafter"/>
</dbReference>
<dbReference type="FunFam" id="3.10.50.40:FF:000001">
    <property type="entry name" value="Trigger factor"/>
    <property type="match status" value="1"/>
</dbReference>
<dbReference type="Gene3D" id="3.10.50.40">
    <property type="match status" value="1"/>
</dbReference>
<dbReference type="Gene3D" id="3.30.70.1050">
    <property type="entry name" value="Trigger factor ribosome-binding domain"/>
    <property type="match status" value="1"/>
</dbReference>
<dbReference type="Gene3D" id="1.10.3120.10">
    <property type="entry name" value="Trigger factor, C-terminal domain"/>
    <property type="match status" value="1"/>
</dbReference>
<dbReference type="HAMAP" id="MF_00303">
    <property type="entry name" value="Trigger_factor_Tig"/>
    <property type="match status" value="1"/>
</dbReference>
<dbReference type="InterPro" id="IPR046357">
    <property type="entry name" value="PPIase_dom_sf"/>
</dbReference>
<dbReference type="InterPro" id="IPR001179">
    <property type="entry name" value="PPIase_FKBP_dom"/>
</dbReference>
<dbReference type="InterPro" id="IPR005215">
    <property type="entry name" value="Trig_fac"/>
</dbReference>
<dbReference type="InterPro" id="IPR008880">
    <property type="entry name" value="Trigger_fac_C"/>
</dbReference>
<dbReference type="InterPro" id="IPR037041">
    <property type="entry name" value="Trigger_fac_C_sf"/>
</dbReference>
<dbReference type="InterPro" id="IPR008881">
    <property type="entry name" value="Trigger_fac_ribosome-bd_bac"/>
</dbReference>
<dbReference type="InterPro" id="IPR036611">
    <property type="entry name" value="Trigger_fac_ribosome-bd_sf"/>
</dbReference>
<dbReference type="InterPro" id="IPR027304">
    <property type="entry name" value="Trigger_fact/SurA_dom_sf"/>
</dbReference>
<dbReference type="NCBIfam" id="TIGR00115">
    <property type="entry name" value="tig"/>
    <property type="match status" value="1"/>
</dbReference>
<dbReference type="PANTHER" id="PTHR30560">
    <property type="entry name" value="TRIGGER FACTOR CHAPERONE AND PEPTIDYL-PROLYL CIS/TRANS ISOMERASE"/>
    <property type="match status" value="1"/>
</dbReference>
<dbReference type="PANTHER" id="PTHR30560:SF3">
    <property type="entry name" value="TRIGGER FACTOR-LIKE PROTEIN TIG, CHLOROPLASTIC"/>
    <property type="match status" value="1"/>
</dbReference>
<dbReference type="Pfam" id="PF00254">
    <property type="entry name" value="FKBP_C"/>
    <property type="match status" value="1"/>
</dbReference>
<dbReference type="Pfam" id="PF05698">
    <property type="entry name" value="Trigger_C"/>
    <property type="match status" value="1"/>
</dbReference>
<dbReference type="Pfam" id="PF05697">
    <property type="entry name" value="Trigger_N"/>
    <property type="match status" value="1"/>
</dbReference>
<dbReference type="PIRSF" id="PIRSF003095">
    <property type="entry name" value="Trigger_factor"/>
    <property type="match status" value="1"/>
</dbReference>
<dbReference type="SUPFAM" id="SSF54534">
    <property type="entry name" value="FKBP-like"/>
    <property type="match status" value="1"/>
</dbReference>
<dbReference type="SUPFAM" id="SSF109998">
    <property type="entry name" value="Triger factor/SurA peptide-binding domain-like"/>
    <property type="match status" value="1"/>
</dbReference>
<dbReference type="SUPFAM" id="SSF102735">
    <property type="entry name" value="Trigger factor ribosome-binding domain"/>
    <property type="match status" value="1"/>
</dbReference>
<dbReference type="PROSITE" id="PS50059">
    <property type="entry name" value="FKBP_PPIASE"/>
    <property type="match status" value="1"/>
</dbReference>
<keyword id="KW-0131">Cell cycle</keyword>
<keyword id="KW-0132">Cell division</keyword>
<keyword id="KW-0143">Chaperone</keyword>
<keyword id="KW-0963">Cytoplasm</keyword>
<keyword id="KW-0413">Isomerase</keyword>
<keyword id="KW-0697">Rotamase</keyword>
<feature type="chain" id="PRO_1000022696" description="Trigger factor">
    <location>
        <begin position="1"/>
        <end position="439"/>
    </location>
</feature>
<feature type="domain" description="PPIase FKBP-type" evidence="1">
    <location>
        <begin position="162"/>
        <end position="247"/>
    </location>
</feature>
<proteinExistence type="inferred from homology"/>
<organism>
    <name type="scientific">Lactobacillus delbrueckii subsp. bulgaricus (strain ATCC BAA-365 / Lb-18)</name>
    <dbReference type="NCBI Taxonomy" id="321956"/>
    <lineage>
        <taxon>Bacteria</taxon>
        <taxon>Bacillati</taxon>
        <taxon>Bacillota</taxon>
        <taxon>Bacilli</taxon>
        <taxon>Lactobacillales</taxon>
        <taxon>Lactobacillaceae</taxon>
        <taxon>Lactobacillus</taxon>
    </lineage>
</organism>
<sequence length="439" mass="48630">MSANWKTTGKTTGELSFEISQDEIKKSLDKAFGRVKKSLRVPGFRKGHVSRVIFNQYYGEEALYEDALNFALPEAYSAAVKETGIKAVGQPQIVPVSMGKNKAWEMKAIVTVEPEVELGQYTEIEVPKQNTRVYQKDIDAELTKRQEQNAEMVLKNDKAENGDTVTIDYVGTVDGVEFDGGSAQNYSLELGSNTFIPGFEDQLVGHGAGEEVDVVVTFPEDYGAKDLAGKEAHFATKIHEVKAKQLPELDDEFAKDVDDSVETLDELKEKIKAELKSEKEEAAKAAIQEAAITTAVKNATVEEIPDVMIQEDVDNQLNQYLGDMQRQGIDPQTYFKLTNTTEDQLRSQLSANAAERVKTNLVLEAIVAKEGFEASKEEIDAEIKDLADNYNMSEKAVRNALSDEMLAHDINVRKAMDLITDSAKQVAKAKLEEGSEEDK</sequence>
<accession>Q04B36</accession>
<gene>
    <name evidence="1" type="primary">tig</name>
    <name type="ordered locus">LBUL_0710</name>
</gene>